<comment type="function">
    <text evidence="1">Binds directly to 23S rRNA. The L1 stalk is quite mobile in the ribosome, and is involved in E site tRNA release.</text>
</comment>
<comment type="function">
    <text evidence="1">Protein L1 is also a translational repressor protein, it controls the translation of the L11 operon by binding to its mRNA.</text>
</comment>
<comment type="subunit">
    <text evidence="1">Part of the 50S ribosomal subunit.</text>
</comment>
<comment type="similarity">
    <text evidence="1">Belongs to the universal ribosomal protein uL1 family.</text>
</comment>
<proteinExistence type="inferred from homology"/>
<reference key="1">
    <citation type="submission" date="2009-01" db="EMBL/GenBank/DDBJ databases">
        <title>Complete sequence of chromosome of Caldicellulosiruptor becscii DSM 6725.</title>
        <authorList>
            <person name="Lucas S."/>
            <person name="Copeland A."/>
            <person name="Lapidus A."/>
            <person name="Glavina del Rio T."/>
            <person name="Tice H."/>
            <person name="Bruce D."/>
            <person name="Goodwin L."/>
            <person name="Pitluck S."/>
            <person name="Sims D."/>
            <person name="Meincke L."/>
            <person name="Brettin T."/>
            <person name="Detter J.C."/>
            <person name="Han C."/>
            <person name="Larimer F."/>
            <person name="Land M."/>
            <person name="Hauser L."/>
            <person name="Kyrpides N."/>
            <person name="Ovchinnikova G."/>
            <person name="Kataeva I."/>
            <person name="Adams M.W.W."/>
        </authorList>
    </citation>
    <scope>NUCLEOTIDE SEQUENCE [LARGE SCALE GENOMIC DNA]</scope>
    <source>
        <strain>ATCC BAA-1888 / DSM 6725 / KCTC 15123 / Z-1320</strain>
    </source>
</reference>
<protein>
    <recommendedName>
        <fullName evidence="1">Large ribosomal subunit protein uL1</fullName>
    </recommendedName>
    <alternativeName>
        <fullName evidence="2">50S ribosomal protein L1</fullName>
    </alternativeName>
</protein>
<gene>
    <name evidence="1" type="primary">rplA</name>
    <name type="ordered locus">Athe_1530</name>
</gene>
<sequence length="230" mass="25016">MFRGKKYQEAAKLVDKTKLYDPEEAIELALKTSYAKFDETVEVHVRLNVDPRHADQQVRGTVVLPNGTGKSVRVLVFAKGDKAKEAEEAGADYVGAEELVAKIQNEGWTDFDVCIATPDMMGLVGRLGKILGPKGLMPNPKSGTVTMDVAKAVKEAKAGRVEFRLDKTAIIHCPIGKVSFGKEKLLENYRTLIEAIIKARPAAAKGQFIKSITVATTMGPGIKINPLKPL</sequence>
<evidence type="ECO:0000255" key="1">
    <source>
        <dbReference type="HAMAP-Rule" id="MF_01318"/>
    </source>
</evidence>
<evidence type="ECO:0000305" key="2"/>
<accession>B9MJX0</accession>
<dbReference type="EMBL" id="CP001393">
    <property type="protein sequence ID" value="ACM60628.1"/>
    <property type="molecule type" value="Genomic_DNA"/>
</dbReference>
<dbReference type="RefSeq" id="WP_015907980.1">
    <property type="nucleotide sequence ID" value="NC_012034.1"/>
</dbReference>
<dbReference type="SMR" id="B9MJX0"/>
<dbReference type="STRING" id="521460.Athe_1530"/>
<dbReference type="GeneID" id="31772880"/>
<dbReference type="KEGG" id="ate:Athe_1530"/>
<dbReference type="eggNOG" id="COG0081">
    <property type="taxonomic scope" value="Bacteria"/>
</dbReference>
<dbReference type="HOGENOM" id="CLU_062853_0_0_9"/>
<dbReference type="Proteomes" id="UP000007723">
    <property type="component" value="Chromosome"/>
</dbReference>
<dbReference type="GO" id="GO:0015934">
    <property type="term" value="C:large ribosomal subunit"/>
    <property type="evidence" value="ECO:0007669"/>
    <property type="project" value="InterPro"/>
</dbReference>
<dbReference type="GO" id="GO:0019843">
    <property type="term" value="F:rRNA binding"/>
    <property type="evidence" value="ECO:0007669"/>
    <property type="project" value="UniProtKB-UniRule"/>
</dbReference>
<dbReference type="GO" id="GO:0003735">
    <property type="term" value="F:structural constituent of ribosome"/>
    <property type="evidence" value="ECO:0007669"/>
    <property type="project" value="InterPro"/>
</dbReference>
<dbReference type="GO" id="GO:0000049">
    <property type="term" value="F:tRNA binding"/>
    <property type="evidence" value="ECO:0007669"/>
    <property type="project" value="UniProtKB-KW"/>
</dbReference>
<dbReference type="GO" id="GO:0006417">
    <property type="term" value="P:regulation of translation"/>
    <property type="evidence" value="ECO:0007669"/>
    <property type="project" value="UniProtKB-KW"/>
</dbReference>
<dbReference type="GO" id="GO:0006412">
    <property type="term" value="P:translation"/>
    <property type="evidence" value="ECO:0007669"/>
    <property type="project" value="UniProtKB-UniRule"/>
</dbReference>
<dbReference type="CDD" id="cd00403">
    <property type="entry name" value="Ribosomal_L1"/>
    <property type="match status" value="1"/>
</dbReference>
<dbReference type="FunFam" id="3.40.50.790:FF:000001">
    <property type="entry name" value="50S ribosomal protein L1"/>
    <property type="match status" value="1"/>
</dbReference>
<dbReference type="Gene3D" id="3.30.190.20">
    <property type="match status" value="1"/>
</dbReference>
<dbReference type="Gene3D" id="3.40.50.790">
    <property type="match status" value="1"/>
</dbReference>
<dbReference type="HAMAP" id="MF_01318_B">
    <property type="entry name" value="Ribosomal_uL1_B"/>
    <property type="match status" value="1"/>
</dbReference>
<dbReference type="InterPro" id="IPR005878">
    <property type="entry name" value="Ribosom_uL1_bac-type"/>
</dbReference>
<dbReference type="InterPro" id="IPR002143">
    <property type="entry name" value="Ribosomal_uL1"/>
</dbReference>
<dbReference type="InterPro" id="IPR023674">
    <property type="entry name" value="Ribosomal_uL1-like"/>
</dbReference>
<dbReference type="InterPro" id="IPR028364">
    <property type="entry name" value="Ribosomal_uL1/biogenesis"/>
</dbReference>
<dbReference type="InterPro" id="IPR016095">
    <property type="entry name" value="Ribosomal_uL1_3-a/b-sand"/>
</dbReference>
<dbReference type="InterPro" id="IPR023673">
    <property type="entry name" value="Ribosomal_uL1_CS"/>
</dbReference>
<dbReference type="NCBIfam" id="TIGR01169">
    <property type="entry name" value="rplA_bact"/>
    <property type="match status" value="1"/>
</dbReference>
<dbReference type="PANTHER" id="PTHR36427">
    <property type="entry name" value="54S RIBOSOMAL PROTEIN L1, MITOCHONDRIAL"/>
    <property type="match status" value="1"/>
</dbReference>
<dbReference type="PANTHER" id="PTHR36427:SF3">
    <property type="entry name" value="LARGE RIBOSOMAL SUBUNIT PROTEIN UL1M"/>
    <property type="match status" value="1"/>
</dbReference>
<dbReference type="Pfam" id="PF00687">
    <property type="entry name" value="Ribosomal_L1"/>
    <property type="match status" value="1"/>
</dbReference>
<dbReference type="PIRSF" id="PIRSF002155">
    <property type="entry name" value="Ribosomal_L1"/>
    <property type="match status" value="1"/>
</dbReference>
<dbReference type="SUPFAM" id="SSF56808">
    <property type="entry name" value="Ribosomal protein L1"/>
    <property type="match status" value="1"/>
</dbReference>
<dbReference type="PROSITE" id="PS01199">
    <property type="entry name" value="RIBOSOMAL_L1"/>
    <property type="match status" value="1"/>
</dbReference>
<feature type="chain" id="PRO_1000165654" description="Large ribosomal subunit protein uL1">
    <location>
        <begin position="1"/>
        <end position="230"/>
    </location>
</feature>
<organism>
    <name type="scientific">Caldicellulosiruptor bescii (strain ATCC BAA-1888 / DSM 6725 / KCTC 15123 / Z-1320)</name>
    <name type="common">Anaerocellum thermophilum</name>
    <dbReference type="NCBI Taxonomy" id="521460"/>
    <lineage>
        <taxon>Bacteria</taxon>
        <taxon>Bacillati</taxon>
        <taxon>Bacillota</taxon>
        <taxon>Bacillota incertae sedis</taxon>
        <taxon>Caldicellulosiruptorales</taxon>
        <taxon>Caldicellulosiruptoraceae</taxon>
        <taxon>Caldicellulosiruptor</taxon>
    </lineage>
</organism>
<name>RL1_CALBD</name>
<keyword id="KW-0678">Repressor</keyword>
<keyword id="KW-0687">Ribonucleoprotein</keyword>
<keyword id="KW-0689">Ribosomal protein</keyword>
<keyword id="KW-0694">RNA-binding</keyword>
<keyword id="KW-0699">rRNA-binding</keyword>
<keyword id="KW-0810">Translation regulation</keyword>
<keyword id="KW-0820">tRNA-binding</keyword>